<keyword id="KW-0143">Chaperone</keyword>
<keyword id="KW-0963">Cytoplasm</keyword>
<keyword id="KW-1185">Reference proteome</keyword>
<keyword id="KW-0690">Ribosome biogenesis</keyword>
<keyword id="KW-0698">rRNA processing</keyword>
<feature type="chain" id="PRO_0000321765" description="Ribosome maturation factor RimM">
    <location>
        <begin position="1"/>
        <end position="163"/>
    </location>
</feature>
<feature type="domain" description="PRC barrel" evidence="1">
    <location>
        <begin position="92"/>
        <end position="161"/>
    </location>
</feature>
<comment type="function">
    <text evidence="1">An accessory protein needed during the final step in the assembly of 30S ribosomal subunit, possibly for assembly of the head region. Essential for efficient processing of 16S rRNA. May be needed both before and after RbfA during the maturation of 16S rRNA. It has affinity for free ribosomal 30S subunits but not for 70S ribosomes.</text>
</comment>
<comment type="subunit">
    <text evidence="1">Binds ribosomal protein uS19.</text>
</comment>
<comment type="subcellular location">
    <subcellularLocation>
        <location evidence="1">Cytoplasm</location>
    </subcellularLocation>
</comment>
<comment type="domain">
    <text evidence="1">The PRC barrel domain binds ribosomal protein uS19.</text>
</comment>
<comment type="similarity">
    <text evidence="1">Belongs to the RimM family.</text>
</comment>
<name>RIMM_SPHAL</name>
<dbReference type="EMBL" id="CP000356">
    <property type="protein sequence ID" value="ABF54431.1"/>
    <property type="molecule type" value="Genomic_DNA"/>
</dbReference>
<dbReference type="RefSeq" id="WP_011542996.1">
    <property type="nucleotide sequence ID" value="NC_008048.1"/>
</dbReference>
<dbReference type="SMR" id="Q1GPJ1"/>
<dbReference type="STRING" id="317655.Sala_2726"/>
<dbReference type="KEGG" id="sal:Sala_2726"/>
<dbReference type="eggNOG" id="COG0806">
    <property type="taxonomic scope" value="Bacteria"/>
</dbReference>
<dbReference type="HOGENOM" id="CLU_077636_0_1_5"/>
<dbReference type="OrthoDB" id="9788191at2"/>
<dbReference type="Proteomes" id="UP000006578">
    <property type="component" value="Chromosome"/>
</dbReference>
<dbReference type="GO" id="GO:0005737">
    <property type="term" value="C:cytoplasm"/>
    <property type="evidence" value="ECO:0007669"/>
    <property type="project" value="UniProtKB-SubCell"/>
</dbReference>
<dbReference type="GO" id="GO:0005840">
    <property type="term" value="C:ribosome"/>
    <property type="evidence" value="ECO:0007669"/>
    <property type="project" value="InterPro"/>
</dbReference>
<dbReference type="GO" id="GO:0043022">
    <property type="term" value="F:ribosome binding"/>
    <property type="evidence" value="ECO:0007669"/>
    <property type="project" value="InterPro"/>
</dbReference>
<dbReference type="GO" id="GO:0042274">
    <property type="term" value="P:ribosomal small subunit biogenesis"/>
    <property type="evidence" value="ECO:0007669"/>
    <property type="project" value="UniProtKB-UniRule"/>
</dbReference>
<dbReference type="GO" id="GO:0006364">
    <property type="term" value="P:rRNA processing"/>
    <property type="evidence" value="ECO:0007669"/>
    <property type="project" value="UniProtKB-UniRule"/>
</dbReference>
<dbReference type="Gene3D" id="2.30.30.240">
    <property type="entry name" value="PRC-barrel domain"/>
    <property type="match status" value="1"/>
</dbReference>
<dbReference type="Gene3D" id="2.40.30.60">
    <property type="entry name" value="RimM"/>
    <property type="match status" value="1"/>
</dbReference>
<dbReference type="HAMAP" id="MF_00014">
    <property type="entry name" value="Ribosome_mat_RimM"/>
    <property type="match status" value="1"/>
</dbReference>
<dbReference type="InterPro" id="IPR011033">
    <property type="entry name" value="PRC_barrel-like_sf"/>
</dbReference>
<dbReference type="InterPro" id="IPR056792">
    <property type="entry name" value="PRC_RimM"/>
</dbReference>
<dbReference type="InterPro" id="IPR011961">
    <property type="entry name" value="RimM"/>
</dbReference>
<dbReference type="InterPro" id="IPR002676">
    <property type="entry name" value="RimM_N"/>
</dbReference>
<dbReference type="InterPro" id="IPR036976">
    <property type="entry name" value="RimM_N_sf"/>
</dbReference>
<dbReference type="InterPro" id="IPR009000">
    <property type="entry name" value="Transl_B-barrel_sf"/>
</dbReference>
<dbReference type="NCBIfam" id="TIGR02273">
    <property type="entry name" value="16S_RimM"/>
    <property type="match status" value="1"/>
</dbReference>
<dbReference type="PANTHER" id="PTHR33692">
    <property type="entry name" value="RIBOSOME MATURATION FACTOR RIMM"/>
    <property type="match status" value="1"/>
</dbReference>
<dbReference type="PANTHER" id="PTHR33692:SF1">
    <property type="entry name" value="RIBOSOME MATURATION FACTOR RIMM"/>
    <property type="match status" value="1"/>
</dbReference>
<dbReference type="Pfam" id="PF24986">
    <property type="entry name" value="PRC_RimM"/>
    <property type="match status" value="1"/>
</dbReference>
<dbReference type="Pfam" id="PF01782">
    <property type="entry name" value="RimM"/>
    <property type="match status" value="1"/>
</dbReference>
<dbReference type="SUPFAM" id="SSF50346">
    <property type="entry name" value="PRC-barrel domain"/>
    <property type="match status" value="1"/>
</dbReference>
<dbReference type="SUPFAM" id="SSF50447">
    <property type="entry name" value="Translation proteins"/>
    <property type="match status" value="1"/>
</dbReference>
<proteinExistence type="inferred from homology"/>
<evidence type="ECO:0000255" key="1">
    <source>
        <dbReference type="HAMAP-Rule" id="MF_00014"/>
    </source>
</evidence>
<organism>
    <name type="scientific">Sphingopyxis alaskensis (strain DSM 13593 / LMG 18877 / RB2256)</name>
    <name type="common">Sphingomonas alaskensis</name>
    <dbReference type="NCBI Taxonomy" id="317655"/>
    <lineage>
        <taxon>Bacteria</taxon>
        <taxon>Pseudomonadati</taxon>
        <taxon>Pseudomonadota</taxon>
        <taxon>Alphaproteobacteria</taxon>
        <taxon>Sphingomonadales</taxon>
        <taxon>Sphingomonadaceae</taxon>
        <taxon>Sphingopyxis</taxon>
    </lineage>
</organism>
<sequence>MTADRPVTLAAIAGAHGVRGEVRLKLFGEGAETLRAFSVFDAGDRKLTLKSVRPANQGAVAAFVEIADRSAAEALRGTLLTVPRSALPPLGPGEYYHHDLIGLPCVSTEGAPVGHVAAVDNFGAGDILEIEKPDGKRFMVPMTVTAVPTWDAETVTVNAAFIE</sequence>
<gene>
    <name evidence="1" type="primary">rimM</name>
    <name type="ordered locus">Sala_2726</name>
</gene>
<reference key="1">
    <citation type="journal article" date="2009" name="Proc. Natl. Acad. Sci. U.S.A.">
        <title>The genomic basis of trophic strategy in marine bacteria.</title>
        <authorList>
            <person name="Lauro F.M."/>
            <person name="McDougald D."/>
            <person name="Thomas T."/>
            <person name="Williams T.J."/>
            <person name="Egan S."/>
            <person name="Rice S."/>
            <person name="DeMaere M.Z."/>
            <person name="Ting L."/>
            <person name="Ertan H."/>
            <person name="Johnson J."/>
            <person name="Ferriera S."/>
            <person name="Lapidus A."/>
            <person name="Anderson I."/>
            <person name="Kyrpides N."/>
            <person name="Munk A.C."/>
            <person name="Detter C."/>
            <person name="Han C.S."/>
            <person name="Brown M.V."/>
            <person name="Robb F.T."/>
            <person name="Kjelleberg S."/>
            <person name="Cavicchioli R."/>
        </authorList>
    </citation>
    <scope>NUCLEOTIDE SEQUENCE [LARGE SCALE GENOMIC DNA]</scope>
    <source>
        <strain>DSM 13593 / LMG 18877 / RB2256</strain>
    </source>
</reference>
<accession>Q1GPJ1</accession>
<protein>
    <recommendedName>
        <fullName evidence="1">Ribosome maturation factor RimM</fullName>
    </recommendedName>
</protein>